<sequence>MASPQGGYPPQEGYGQPAGYGSPTQQHAGMAAGAPPQGHAGGKKKRAYAGEAFEIGSGANAALGGQLPAGGSYGAYPPQPQAAGYQQPVYGADPSQMNAAAPGYAAPATPGVAQMTQQFGAMGVTDPHLMPPQPPQAAVAPQAPRPVPLNQLYPTDLLTQPFNVAELDYPPPPIVLPPGTSVYPSPTANCPPKYVRSTLNAVPTTHSLLKKSKLPFALVIQPYASLRDAEDPIPVIPDQVISRCRRCRSYINPFVTFLDHGHRWRCNMCNLTNDVPQAFDWDAALQKPADRSLRPDLNHAVVEFVAPQEYMVRPPQPLVYLFLIDVSYASVTNGLLATSARCIKESLDRIPNADRRTRLGFIAVDSSLHYFSIPRDGSENSDPRMLVISDLDEPFLPIPGDLLVTLSECRENIETFLDKLQEMFQNTQNNGCAMGSALRAGYKLIAPVGGKMTVLSSSLPNVGHGSLTMREDKKVLGTSKESSLLQTANSFYKSFAVECSKAQVSVDMFLFSSQYQDVASLSNLPRYTGGQTYFYPGWNAARGEDAIKFAREFSDYLSSEIGLEAVLRVRATTGLRMNTFYGNFFNRSSDLCAFPAFPRDQAYVVEVAIDETVTKPIVCLQTAVLHTTCNGERRIRVLTLALPTTQNLADVYASADQQAIATYFSHKAVERVLSSGLEPAREALQAKAVELLSTYRKELAGGSVSGGGLQFPANLRGLPVLFLAMIKNLGLRKSAQIPTDMRSAALCLLSTLPLPLLIQYIYPKMYSLHDMPDNAGLPDEQTGEIVLPPPINLSSERIVPYGLYLIDDGQTQFLWVGRDAVPQLLLDVFGLPDRSQLRVGKQNLPELDNDFNQRVRAVIEKSRDHRSKGVGSIVVPHLYVVKEDGEPGLRLWAQTMLVEDRADQSVSLVQWMGSLREKV</sequence>
<proteinExistence type="inferred from homology"/>
<gene>
    <name type="primary">sec24</name>
    <name type="ORF">NFIA_058780</name>
</gene>
<name>SEC24_NEOFI</name>
<evidence type="ECO:0000250" key="1"/>
<evidence type="ECO:0000256" key="2">
    <source>
        <dbReference type="SAM" id="MobiDB-lite"/>
    </source>
</evidence>
<evidence type="ECO:0000305" key="3"/>
<protein>
    <recommendedName>
        <fullName>Protein transport protein SEC24</fullName>
    </recommendedName>
</protein>
<organism>
    <name type="scientific">Neosartorya fischeri (strain ATCC 1020 / DSM 3700 / CBS 544.65 / FGSC A1164 / JCM 1740 / NRRL 181 / WB 181)</name>
    <name type="common">Aspergillus fischerianus</name>
    <dbReference type="NCBI Taxonomy" id="331117"/>
    <lineage>
        <taxon>Eukaryota</taxon>
        <taxon>Fungi</taxon>
        <taxon>Dikarya</taxon>
        <taxon>Ascomycota</taxon>
        <taxon>Pezizomycotina</taxon>
        <taxon>Eurotiomycetes</taxon>
        <taxon>Eurotiomycetidae</taxon>
        <taxon>Eurotiales</taxon>
        <taxon>Aspergillaceae</taxon>
        <taxon>Aspergillus</taxon>
        <taxon>Aspergillus subgen. Fumigati</taxon>
    </lineage>
</organism>
<keyword id="KW-0963">Cytoplasm</keyword>
<keyword id="KW-0968">Cytoplasmic vesicle</keyword>
<keyword id="KW-0256">Endoplasmic reticulum</keyword>
<keyword id="KW-0931">ER-Golgi transport</keyword>
<keyword id="KW-0333">Golgi apparatus</keyword>
<keyword id="KW-0472">Membrane</keyword>
<keyword id="KW-0479">Metal-binding</keyword>
<keyword id="KW-0653">Protein transport</keyword>
<keyword id="KW-1185">Reference proteome</keyword>
<keyword id="KW-0813">Transport</keyword>
<keyword id="KW-0862">Zinc</keyword>
<reference key="1">
    <citation type="journal article" date="2008" name="PLoS Genet.">
        <title>Genomic islands in the pathogenic filamentous fungus Aspergillus fumigatus.</title>
        <authorList>
            <person name="Fedorova N.D."/>
            <person name="Khaldi N."/>
            <person name="Joardar V.S."/>
            <person name="Maiti R."/>
            <person name="Amedeo P."/>
            <person name="Anderson M.J."/>
            <person name="Crabtree J."/>
            <person name="Silva J.C."/>
            <person name="Badger J.H."/>
            <person name="Albarraq A."/>
            <person name="Angiuoli S."/>
            <person name="Bussey H."/>
            <person name="Bowyer P."/>
            <person name="Cotty P.J."/>
            <person name="Dyer P.S."/>
            <person name="Egan A."/>
            <person name="Galens K."/>
            <person name="Fraser-Liggett C.M."/>
            <person name="Haas B.J."/>
            <person name="Inman J.M."/>
            <person name="Kent R."/>
            <person name="Lemieux S."/>
            <person name="Malavazi I."/>
            <person name="Orvis J."/>
            <person name="Roemer T."/>
            <person name="Ronning C.M."/>
            <person name="Sundaram J.P."/>
            <person name="Sutton G."/>
            <person name="Turner G."/>
            <person name="Venter J.C."/>
            <person name="White O.R."/>
            <person name="Whitty B.R."/>
            <person name="Youngman P."/>
            <person name="Wolfe K.H."/>
            <person name="Goldman G.H."/>
            <person name="Wortman J.R."/>
            <person name="Jiang B."/>
            <person name="Denning D.W."/>
            <person name="Nierman W.C."/>
        </authorList>
    </citation>
    <scope>NUCLEOTIDE SEQUENCE [LARGE SCALE GENOMIC DNA]</scope>
    <source>
        <strain>ATCC 1020 / DSM 3700 / CBS 544.65 / FGSC A1164 / JCM 1740 / NRRL 181 / WB 181</strain>
    </source>
</reference>
<feature type="chain" id="PRO_0000295492" description="Protein transport protein SEC24">
    <location>
        <begin position="1"/>
        <end position="919"/>
    </location>
</feature>
<feature type="region of interest" description="Disordered" evidence="2">
    <location>
        <begin position="1"/>
        <end position="46"/>
    </location>
</feature>
<feature type="region of interest" description="Zinc finger-like">
    <location>
        <begin position="244"/>
        <end position="269"/>
    </location>
</feature>
<feature type="compositionally biased region" description="Low complexity" evidence="2">
    <location>
        <begin position="1"/>
        <end position="38"/>
    </location>
</feature>
<feature type="binding site" evidence="1">
    <location>
        <position position="244"/>
    </location>
    <ligand>
        <name>Zn(2+)</name>
        <dbReference type="ChEBI" id="CHEBI:29105"/>
    </ligand>
</feature>
<feature type="binding site" evidence="1">
    <location>
        <position position="247"/>
    </location>
    <ligand>
        <name>Zn(2+)</name>
        <dbReference type="ChEBI" id="CHEBI:29105"/>
    </ligand>
</feature>
<feature type="binding site" evidence="1">
    <location>
        <position position="266"/>
    </location>
    <ligand>
        <name>Zn(2+)</name>
        <dbReference type="ChEBI" id="CHEBI:29105"/>
    </ligand>
</feature>
<feature type="binding site" evidence="1">
    <location>
        <position position="269"/>
    </location>
    <ligand>
        <name>Zn(2+)</name>
        <dbReference type="ChEBI" id="CHEBI:29105"/>
    </ligand>
</feature>
<comment type="function">
    <text evidence="1">Component of the coat protein complex II (COPII) which promotes the formation of transport vesicles from the endoplasmic reticulum (ER). The coat has two main functions, the physical deformation of the endoplasmic reticulum membrane into vesicles and the selection of cargo molecules (By similarity).</text>
</comment>
<comment type="subunit">
    <text evidence="1">The COPII coat is composed of at least 5 proteins: the sec23/24 complex, the sec13/31 complex, and the protein sar1. Golgi apparatus membrane; Peripheral membrane protein; Cytoplasmic side.</text>
</comment>
<comment type="subcellular location">
    <subcellularLocation>
        <location evidence="1">Cytoplasm</location>
    </subcellularLocation>
    <subcellularLocation>
        <location evidence="1">Cytoplasmic vesicle</location>
        <location evidence="1">COPII-coated vesicle membrane</location>
        <topology evidence="1">Peripheral membrane protein</topology>
        <orientation evidence="1">Cytoplasmic side</orientation>
    </subcellularLocation>
    <subcellularLocation>
        <location evidence="1">Endoplasmic reticulum membrane</location>
        <topology evidence="1">Peripheral membrane protein</topology>
        <orientation evidence="1">Cytoplasmic side</orientation>
    </subcellularLocation>
    <subcellularLocation>
        <location evidence="1">Golgi apparatus membrane</location>
        <topology evidence="1">Peripheral membrane protein</topology>
        <orientation evidence="1">Cytoplasmic side</orientation>
    </subcellularLocation>
</comment>
<comment type="similarity">
    <text evidence="3">Belongs to the SEC23/SEC24 family. SEC24 subfamily.</text>
</comment>
<accession>A1DP06</accession>
<dbReference type="EMBL" id="DS027698">
    <property type="protein sequence ID" value="EAW16527.1"/>
    <property type="molecule type" value="Genomic_DNA"/>
</dbReference>
<dbReference type="RefSeq" id="XP_001258424.1">
    <property type="nucleotide sequence ID" value="XM_001258423.1"/>
</dbReference>
<dbReference type="SMR" id="A1DP06"/>
<dbReference type="STRING" id="331117.A1DP06"/>
<dbReference type="EnsemblFungi" id="EAW16527">
    <property type="protein sequence ID" value="EAW16527"/>
    <property type="gene ID" value="NFIA_058780"/>
</dbReference>
<dbReference type="GeneID" id="4584940"/>
<dbReference type="KEGG" id="nfi:NFIA_058780"/>
<dbReference type="VEuPathDB" id="FungiDB:NFIA_058780"/>
<dbReference type="eggNOG" id="KOG1985">
    <property type="taxonomic scope" value="Eukaryota"/>
</dbReference>
<dbReference type="HOGENOM" id="CLU_004589_2_1_1"/>
<dbReference type="OMA" id="AVECSKQ"/>
<dbReference type="OrthoDB" id="49016at2759"/>
<dbReference type="Proteomes" id="UP000006702">
    <property type="component" value="Unassembled WGS sequence"/>
</dbReference>
<dbReference type="GO" id="GO:0005801">
    <property type="term" value="C:cis-Golgi network"/>
    <property type="evidence" value="ECO:0007669"/>
    <property type="project" value="EnsemblFungi"/>
</dbReference>
<dbReference type="GO" id="GO:0030127">
    <property type="term" value="C:COPII vesicle coat"/>
    <property type="evidence" value="ECO:0007669"/>
    <property type="project" value="InterPro"/>
</dbReference>
<dbReference type="GO" id="GO:0070971">
    <property type="term" value="C:endoplasmic reticulum exit site"/>
    <property type="evidence" value="ECO:0007669"/>
    <property type="project" value="EnsemblFungi"/>
</dbReference>
<dbReference type="GO" id="GO:0005789">
    <property type="term" value="C:endoplasmic reticulum membrane"/>
    <property type="evidence" value="ECO:0007669"/>
    <property type="project" value="UniProtKB-SubCell"/>
</dbReference>
<dbReference type="GO" id="GO:1990753">
    <property type="term" value="C:equatorial cell cortex"/>
    <property type="evidence" value="ECO:0007669"/>
    <property type="project" value="EnsemblFungi"/>
</dbReference>
<dbReference type="GO" id="GO:0000139">
    <property type="term" value="C:Golgi membrane"/>
    <property type="evidence" value="ECO:0007669"/>
    <property type="project" value="UniProtKB-SubCell"/>
</dbReference>
<dbReference type="GO" id="GO:0000149">
    <property type="term" value="F:SNARE binding"/>
    <property type="evidence" value="ECO:0007669"/>
    <property type="project" value="TreeGrafter"/>
</dbReference>
<dbReference type="GO" id="GO:0008270">
    <property type="term" value="F:zinc ion binding"/>
    <property type="evidence" value="ECO:0007669"/>
    <property type="project" value="InterPro"/>
</dbReference>
<dbReference type="GO" id="GO:0090110">
    <property type="term" value="P:COPII-coated vesicle cargo loading"/>
    <property type="evidence" value="ECO:0007669"/>
    <property type="project" value="TreeGrafter"/>
</dbReference>
<dbReference type="GO" id="GO:0006886">
    <property type="term" value="P:intracellular protein transport"/>
    <property type="evidence" value="ECO:0007669"/>
    <property type="project" value="InterPro"/>
</dbReference>
<dbReference type="CDD" id="cd01479">
    <property type="entry name" value="Sec24-like"/>
    <property type="match status" value="1"/>
</dbReference>
<dbReference type="Gene3D" id="2.60.40.1670">
    <property type="entry name" value="beta-sandwich domain of Sec23/24"/>
    <property type="match status" value="1"/>
</dbReference>
<dbReference type="Gene3D" id="1.20.120.730">
    <property type="entry name" value="Sec23/Sec24 helical domain"/>
    <property type="match status" value="1"/>
</dbReference>
<dbReference type="Gene3D" id="3.40.20.10">
    <property type="entry name" value="Severin"/>
    <property type="match status" value="1"/>
</dbReference>
<dbReference type="Gene3D" id="3.40.50.410">
    <property type="entry name" value="von Willebrand factor, type A domain"/>
    <property type="match status" value="1"/>
</dbReference>
<dbReference type="Gene3D" id="2.30.30.380">
    <property type="entry name" value="Zn-finger domain of Sec23/24"/>
    <property type="match status" value="1"/>
</dbReference>
<dbReference type="InterPro" id="IPR029006">
    <property type="entry name" value="ADF-H/Gelsolin-like_dom_sf"/>
</dbReference>
<dbReference type="InterPro" id="IPR007123">
    <property type="entry name" value="Gelsolin-like_dom"/>
</dbReference>
<dbReference type="InterPro" id="IPR036180">
    <property type="entry name" value="Gelsolin-like_dom_sf"/>
</dbReference>
<dbReference type="InterPro" id="IPR006900">
    <property type="entry name" value="Sec23/24_helical_dom"/>
</dbReference>
<dbReference type="InterPro" id="IPR036175">
    <property type="entry name" value="Sec23/24_helical_dom_sf"/>
</dbReference>
<dbReference type="InterPro" id="IPR006896">
    <property type="entry name" value="Sec23/24_trunk_dom"/>
</dbReference>
<dbReference type="InterPro" id="IPR012990">
    <property type="entry name" value="Sec23_24_beta_S"/>
</dbReference>
<dbReference type="InterPro" id="IPR050550">
    <property type="entry name" value="SEC23_SEC24_subfamily"/>
</dbReference>
<dbReference type="InterPro" id="IPR041742">
    <property type="entry name" value="Sec24-like_trunk_dom"/>
</dbReference>
<dbReference type="InterPro" id="IPR036465">
    <property type="entry name" value="vWFA_dom_sf"/>
</dbReference>
<dbReference type="InterPro" id="IPR006895">
    <property type="entry name" value="Znf_Sec23_Sec24"/>
</dbReference>
<dbReference type="InterPro" id="IPR036174">
    <property type="entry name" value="Znf_Sec23_Sec24_sf"/>
</dbReference>
<dbReference type="PANTHER" id="PTHR13803">
    <property type="entry name" value="SEC24-RELATED PROTEIN"/>
    <property type="match status" value="1"/>
</dbReference>
<dbReference type="PANTHER" id="PTHR13803:SF39">
    <property type="entry name" value="SECRETORY 24AB, ISOFORM A"/>
    <property type="match status" value="1"/>
</dbReference>
<dbReference type="Pfam" id="PF00626">
    <property type="entry name" value="Gelsolin"/>
    <property type="match status" value="1"/>
</dbReference>
<dbReference type="Pfam" id="PF08033">
    <property type="entry name" value="Sec23_BS"/>
    <property type="match status" value="1"/>
</dbReference>
<dbReference type="Pfam" id="PF04815">
    <property type="entry name" value="Sec23_helical"/>
    <property type="match status" value="1"/>
</dbReference>
<dbReference type="Pfam" id="PF04811">
    <property type="entry name" value="Sec23_trunk"/>
    <property type="match status" value="1"/>
</dbReference>
<dbReference type="Pfam" id="PF04810">
    <property type="entry name" value="zf-Sec23_Sec24"/>
    <property type="match status" value="1"/>
</dbReference>
<dbReference type="SUPFAM" id="SSF81995">
    <property type="entry name" value="beta-sandwich domain of Sec23/24"/>
    <property type="match status" value="1"/>
</dbReference>
<dbReference type="SUPFAM" id="SSF82754">
    <property type="entry name" value="C-terminal, gelsolin-like domain of Sec23/24"/>
    <property type="match status" value="1"/>
</dbReference>
<dbReference type="SUPFAM" id="SSF81811">
    <property type="entry name" value="Helical domain of Sec23/24"/>
    <property type="match status" value="1"/>
</dbReference>
<dbReference type="SUPFAM" id="SSF53300">
    <property type="entry name" value="vWA-like"/>
    <property type="match status" value="1"/>
</dbReference>
<dbReference type="SUPFAM" id="SSF82919">
    <property type="entry name" value="Zn-finger domain of Sec23/24"/>
    <property type="match status" value="1"/>
</dbReference>